<dbReference type="EC" id="2.7.11.1" evidence="1"/>
<dbReference type="EMBL" id="AB103395">
    <property type="protein sequence ID" value="BAC81207.1"/>
    <property type="molecule type" value="mRNA"/>
</dbReference>
<dbReference type="EMBL" id="AP003451">
    <property type="protein sequence ID" value="BAB86144.1"/>
    <property type="molecule type" value="Genomic_DNA"/>
</dbReference>
<dbReference type="EMBL" id="AP008207">
    <property type="protein sequence ID" value="BAF07116.1"/>
    <property type="molecule type" value="Genomic_DNA"/>
</dbReference>
<dbReference type="EMBL" id="AP014957">
    <property type="status" value="NOT_ANNOTATED_CDS"/>
    <property type="molecule type" value="Genomic_DNA"/>
</dbReference>
<dbReference type="RefSeq" id="XP_015622427.1">
    <property type="nucleotide sequence ID" value="XM_015766941.1"/>
</dbReference>
<dbReference type="RefSeq" id="XP_015622428.1">
    <property type="nucleotide sequence ID" value="XM_015766942.1"/>
</dbReference>
<dbReference type="SMR" id="Q8RZV7"/>
<dbReference type="FunCoup" id="Q8RZV7">
    <property type="interactions" value="244"/>
</dbReference>
<dbReference type="STRING" id="39947.Q8RZV7"/>
<dbReference type="GlyCosmos" id="Q8RZV7">
    <property type="glycosylation" value="16 sites, No reported glycans"/>
</dbReference>
<dbReference type="PaxDb" id="39947-Q8RZV7"/>
<dbReference type="EnsemblPlants" id="Os01t0917500-01">
    <property type="protein sequence ID" value="Os01t0917500-01"/>
    <property type="gene ID" value="Os01g0917500"/>
</dbReference>
<dbReference type="GeneID" id="4324355"/>
<dbReference type="Gramene" id="Os01t0917500-01">
    <property type="protein sequence ID" value="Os01t0917500-01"/>
    <property type="gene ID" value="Os01g0917500"/>
</dbReference>
<dbReference type="KEGG" id="dosa:Os01g0917500"/>
<dbReference type="KEGG" id="osa:4324355"/>
<dbReference type="eggNOG" id="ENOG502QRD1">
    <property type="taxonomic scope" value="Eukaryota"/>
</dbReference>
<dbReference type="HOGENOM" id="CLU_000288_22_1_1"/>
<dbReference type="InParanoid" id="Q8RZV7"/>
<dbReference type="OrthoDB" id="551849at2759"/>
<dbReference type="PlantReactome" id="R-OSA-8986768">
    <property type="pathway name" value="Anther and pollen development"/>
</dbReference>
<dbReference type="Proteomes" id="UP000000763">
    <property type="component" value="Chromosome 1"/>
</dbReference>
<dbReference type="Proteomes" id="UP000059680">
    <property type="component" value="Chromosome 1"/>
</dbReference>
<dbReference type="GO" id="GO:0016020">
    <property type="term" value="C:membrane"/>
    <property type="evidence" value="ECO:0000318"/>
    <property type="project" value="GO_Central"/>
</dbReference>
<dbReference type="GO" id="GO:0005886">
    <property type="term" value="C:plasma membrane"/>
    <property type="evidence" value="ECO:0007669"/>
    <property type="project" value="UniProtKB-SubCell"/>
</dbReference>
<dbReference type="GO" id="GO:0005524">
    <property type="term" value="F:ATP binding"/>
    <property type="evidence" value="ECO:0007669"/>
    <property type="project" value="UniProtKB-KW"/>
</dbReference>
<dbReference type="GO" id="GO:0106310">
    <property type="term" value="F:protein serine kinase activity"/>
    <property type="evidence" value="ECO:0007669"/>
    <property type="project" value="RHEA"/>
</dbReference>
<dbReference type="GO" id="GO:0004674">
    <property type="term" value="F:protein serine/threonine kinase activity"/>
    <property type="evidence" value="ECO:0000250"/>
    <property type="project" value="Gramene"/>
</dbReference>
<dbReference type="GO" id="GO:0048658">
    <property type="term" value="P:anther wall tapetum development"/>
    <property type="evidence" value="ECO:0000315"/>
    <property type="project" value="Gramene"/>
</dbReference>
<dbReference type="GO" id="GO:0009554">
    <property type="term" value="P:megasporogenesis"/>
    <property type="evidence" value="ECO:0000315"/>
    <property type="project" value="Gramene"/>
</dbReference>
<dbReference type="GO" id="GO:0009556">
    <property type="term" value="P:microsporogenesis"/>
    <property type="evidence" value="ECO:0000315"/>
    <property type="project" value="Gramene"/>
</dbReference>
<dbReference type="CDD" id="cd14066">
    <property type="entry name" value="STKc_IRAK"/>
    <property type="match status" value="1"/>
</dbReference>
<dbReference type="FunFam" id="3.80.10.10:FF:000513">
    <property type="entry name" value="Leucine-rich repeat receptor protein kinase EMS1"/>
    <property type="match status" value="1"/>
</dbReference>
<dbReference type="FunFam" id="3.80.10.10:FF:000591">
    <property type="entry name" value="Leucine-rich repeat receptor protein kinase MSP1"/>
    <property type="match status" value="1"/>
</dbReference>
<dbReference type="FunFam" id="3.80.10.10:FF:000626">
    <property type="entry name" value="Leucine-rich repeat receptor protein kinase MSP1"/>
    <property type="match status" value="1"/>
</dbReference>
<dbReference type="FunFam" id="3.30.200.20:FF:000745">
    <property type="entry name" value="Phytosulfokine receptor 2"/>
    <property type="match status" value="1"/>
</dbReference>
<dbReference type="FunFam" id="3.80.10.10:FF:000737">
    <property type="entry name" value="Predicted protein"/>
    <property type="match status" value="1"/>
</dbReference>
<dbReference type="FunFam" id="1.10.510.10:FF:000526">
    <property type="entry name" value="serine/threonine-protein kinase BRI1-like 2"/>
    <property type="match status" value="1"/>
</dbReference>
<dbReference type="Gene3D" id="3.30.200.20">
    <property type="entry name" value="Phosphorylase Kinase, domain 1"/>
    <property type="match status" value="1"/>
</dbReference>
<dbReference type="Gene3D" id="3.80.10.10">
    <property type="entry name" value="Ribonuclease Inhibitor"/>
    <property type="match status" value="5"/>
</dbReference>
<dbReference type="Gene3D" id="1.10.510.10">
    <property type="entry name" value="Transferase(Phosphotransferase) domain 1"/>
    <property type="match status" value="1"/>
</dbReference>
<dbReference type="InterPro" id="IPR011009">
    <property type="entry name" value="Kinase-like_dom_sf"/>
</dbReference>
<dbReference type="InterPro" id="IPR001611">
    <property type="entry name" value="Leu-rich_rpt"/>
</dbReference>
<dbReference type="InterPro" id="IPR003591">
    <property type="entry name" value="Leu-rich_rpt_typical-subtyp"/>
</dbReference>
<dbReference type="InterPro" id="IPR032675">
    <property type="entry name" value="LRR_dom_sf"/>
</dbReference>
<dbReference type="InterPro" id="IPR013210">
    <property type="entry name" value="LRR_N_plant-typ"/>
</dbReference>
<dbReference type="InterPro" id="IPR051716">
    <property type="entry name" value="Plant_RL_S/T_kinase"/>
</dbReference>
<dbReference type="InterPro" id="IPR000719">
    <property type="entry name" value="Prot_kinase_dom"/>
</dbReference>
<dbReference type="InterPro" id="IPR017441">
    <property type="entry name" value="Protein_kinase_ATP_BS"/>
</dbReference>
<dbReference type="InterPro" id="IPR001245">
    <property type="entry name" value="Ser-Thr/Tyr_kinase_cat_dom"/>
</dbReference>
<dbReference type="InterPro" id="IPR008271">
    <property type="entry name" value="Ser/Thr_kinase_AS"/>
</dbReference>
<dbReference type="PANTHER" id="PTHR48053:SF154">
    <property type="entry name" value="(WILD MALAYSIAN BANANA) HYPOTHETICAL PROTEIN"/>
    <property type="match status" value="1"/>
</dbReference>
<dbReference type="PANTHER" id="PTHR48053">
    <property type="entry name" value="LEUCINE RICH REPEAT FAMILY PROTEIN, EXPRESSED"/>
    <property type="match status" value="1"/>
</dbReference>
<dbReference type="Pfam" id="PF00560">
    <property type="entry name" value="LRR_1"/>
    <property type="match status" value="9"/>
</dbReference>
<dbReference type="Pfam" id="PF13855">
    <property type="entry name" value="LRR_8"/>
    <property type="match status" value="3"/>
</dbReference>
<dbReference type="Pfam" id="PF08263">
    <property type="entry name" value="LRRNT_2"/>
    <property type="match status" value="1"/>
</dbReference>
<dbReference type="Pfam" id="PF07714">
    <property type="entry name" value="PK_Tyr_Ser-Thr"/>
    <property type="match status" value="1"/>
</dbReference>
<dbReference type="PRINTS" id="PR00019">
    <property type="entry name" value="LEURICHRPT"/>
</dbReference>
<dbReference type="SMART" id="SM00365">
    <property type="entry name" value="LRR_SD22"/>
    <property type="match status" value="5"/>
</dbReference>
<dbReference type="SMART" id="SM00369">
    <property type="entry name" value="LRR_TYP"/>
    <property type="match status" value="10"/>
</dbReference>
<dbReference type="SMART" id="SM00220">
    <property type="entry name" value="S_TKc"/>
    <property type="match status" value="1"/>
</dbReference>
<dbReference type="SUPFAM" id="SSF52058">
    <property type="entry name" value="L domain-like"/>
    <property type="match status" value="2"/>
</dbReference>
<dbReference type="SUPFAM" id="SSF56112">
    <property type="entry name" value="Protein kinase-like (PK-like)"/>
    <property type="match status" value="1"/>
</dbReference>
<dbReference type="SUPFAM" id="SSF52047">
    <property type="entry name" value="RNI-like"/>
    <property type="match status" value="1"/>
</dbReference>
<dbReference type="PROSITE" id="PS51450">
    <property type="entry name" value="LRR"/>
    <property type="match status" value="17"/>
</dbReference>
<dbReference type="PROSITE" id="PS00107">
    <property type="entry name" value="PROTEIN_KINASE_ATP"/>
    <property type="match status" value="1"/>
</dbReference>
<dbReference type="PROSITE" id="PS50011">
    <property type="entry name" value="PROTEIN_KINASE_DOM"/>
    <property type="match status" value="1"/>
</dbReference>
<dbReference type="PROSITE" id="PS00108">
    <property type="entry name" value="PROTEIN_KINASE_ST"/>
    <property type="match status" value="1"/>
</dbReference>
<feature type="signal peptide" evidence="1">
    <location>
        <begin position="1"/>
        <end position="22"/>
    </location>
</feature>
<feature type="chain" id="PRO_0000432097" description="Leucine-rich repeat receptor protein kinase MSP1" evidence="1">
    <location>
        <begin position="23"/>
        <end position="1294"/>
    </location>
</feature>
<feature type="transmembrane region" description="Helical" evidence="1">
    <location>
        <begin position="917"/>
        <end position="937"/>
    </location>
</feature>
<feature type="repeat" description="LRR 1" evidence="1">
    <location>
        <begin position="88"/>
        <end position="112"/>
    </location>
</feature>
<feature type="repeat" description="LRR 2" evidence="1">
    <location>
        <begin position="113"/>
        <end position="136"/>
    </location>
</feature>
<feature type="repeat" description="LRR 3" evidence="1">
    <location>
        <begin position="138"/>
        <end position="160"/>
    </location>
</feature>
<feature type="repeat" description="LRR 4" evidence="1">
    <location>
        <begin position="161"/>
        <end position="184"/>
    </location>
</feature>
<feature type="repeat" description="LRR 5" evidence="1">
    <location>
        <begin position="186"/>
        <end position="207"/>
    </location>
</feature>
<feature type="repeat" description="LRR 6" evidence="1">
    <location>
        <begin position="232"/>
        <end position="256"/>
    </location>
</feature>
<feature type="repeat" description="LRR 7" evidence="1">
    <location>
        <begin position="258"/>
        <end position="280"/>
    </location>
</feature>
<feature type="repeat" description="LRR 8" evidence="1">
    <location>
        <begin position="282"/>
        <end position="304"/>
    </location>
</feature>
<feature type="repeat" description="LRR 9" evidence="1">
    <location>
        <begin position="305"/>
        <end position="328"/>
    </location>
</feature>
<feature type="repeat" description="LRR 10" evidence="1">
    <location>
        <begin position="330"/>
        <end position="352"/>
    </location>
</feature>
<feature type="repeat" description="LRR 11" evidence="1">
    <location>
        <begin position="353"/>
        <end position="376"/>
    </location>
</feature>
<feature type="repeat" description="LRR 12" evidence="1">
    <location>
        <begin position="378"/>
        <end position="400"/>
    </location>
</feature>
<feature type="repeat" description="LRR 13" evidence="1">
    <location>
        <begin position="401"/>
        <end position="422"/>
    </location>
</feature>
<feature type="repeat" description="LRR 14" evidence="1">
    <location>
        <begin position="423"/>
        <end position="446"/>
    </location>
</feature>
<feature type="repeat" description="LRR 15" evidence="1">
    <location>
        <begin position="447"/>
        <end position="469"/>
    </location>
</feature>
<feature type="repeat" description="LRR 16" evidence="1">
    <location>
        <begin position="471"/>
        <end position="493"/>
    </location>
</feature>
<feature type="repeat" description="LRR 17" evidence="1">
    <location>
        <begin position="494"/>
        <end position="517"/>
    </location>
</feature>
<feature type="repeat" description="LRR 18" evidence="1">
    <location>
        <begin position="519"/>
        <end position="541"/>
    </location>
</feature>
<feature type="repeat" description="LRR 19" evidence="1">
    <location>
        <begin position="542"/>
        <end position="565"/>
    </location>
</feature>
<feature type="repeat" description="LRR 20" evidence="1">
    <location>
        <begin position="566"/>
        <end position="589"/>
    </location>
</feature>
<feature type="repeat" description="LRR 21" evidence="1">
    <location>
        <begin position="591"/>
        <end position="613"/>
    </location>
</feature>
<feature type="repeat" description="LRR 22" evidence="1">
    <location>
        <begin position="614"/>
        <end position="637"/>
    </location>
</feature>
<feature type="repeat" description="LRR 23" evidence="1">
    <location>
        <begin position="649"/>
        <end position="673"/>
    </location>
</feature>
<feature type="repeat" description="LRR 24" evidence="1">
    <location>
        <begin position="675"/>
        <end position="697"/>
    </location>
</feature>
<feature type="repeat" description="LRR 25" evidence="1">
    <location>
        <begin position="698"/>
        <end position="721"/>
    </location>
</feature>
<feature type="repeat" description="LRR 26" evidence="1">
    <location>
        <begin position="722"/>
        <end position="745"/>
    </location>
</feature>
<feature type="repeat" description="LRR 27" evidence="1">
    <location>
        <begin position="746"/>
        <end position="770"/>
    </location>
</feature>
<feature type="repeat" description="LRR 28" evidence="1">
    <location>
        <begin position="772"/>
        <end position="794"/>
    </location>
</feature>
<feature type="repeat" description="LRR 29" evidence="1">
    <location>
        <begin position="822"/>
        <end position="846"/>
    </location>
</feature>
<feature type="repeat" description="LRR 30" evidence="1">
    <location>
        <begin position="848"/>
        <end position="870"/>
    </location>
</feature>
<feature type="domain" description="Protein kinase" evidence="2">
    <location>
        <begin position="1002"/>
        <end position="1282"/>
    </location>
</feature>
<feature type="active site" description="Proton acceptor" evidence="2">
    <location>
        <position position="1129"/>
    </location>
</feature>
<feature type="binding site" evidence="2">
    <location>
        <begin position="1008"/>
        <end position="1016"/>
    </location>
    <ligand>
        <name>ATP</name>
        <dbReference type="ChEBI" id="CHEBI:30616"/>
    </ligand>
</feature>
<feature type="binding site" evidence="2">
    <location>
        <position position="1030"/>
    </location>
    <ligand>
        <name>ATP</name>
        <dbReference type="ChEBI" id="CHEBI:30616"/>
    </ligand>
</feature>
<feature type="glycosylation site" description="N-linked (GlcNAc...) asparagine" evidence="3">
    <location>
        <position position="198"/>
    </location>
</feature>
<feature type="glycosylation site" description="N-linked (GlcNAc...) asparagine" evidence="3">
    <location>
        <position position="207"/>
    </location>
</feature>
<feature type="glycosylation site" description="N-linked (GlcNAc...) asparagine" evidence="3">
    <location>
        <position position="220"/>
    </location>
</feature>
<feature type="glycosylation site" description="N-linked (GlcNAc...) asparagine" evidence="3">
    <location>
        <position position="330"/>
    </location>
</feature>
<feature type="glycosylation site" description="N-linked (GlcNAc...) asparagine" evidence="3">
    <location>
        <position position="359"/>
    </location>
</feature>
<feature type="glycosylation site" description="N-linked (GlcNAc...) asparagine" evidence="3">
    <location>
        <position position="458"/>
    </location>
</feature>
<feature type="glycosylation site" description="N-linked (GlcNAc...) asparagine" evidence="3">
    <location>
        <position position="472"/>
    </location>
</feature>
<feature type="glycosylation site" description="N-linked (GlcNAc...) asparagine" evidence="3">
    <location>
        <position position="567"/>
    </location>
</feature>
<feature type="glycosylation site" description="N-linked (GlcNAc...) asparagine" evidence="3">
    <location>
        <position position="570"/>
    </location>
</feature>
<feature type="glycosylation site" description="N-linked (GlcNAc...) asparagine" evidence="3">
    <location>
        <position position="601"/>
    </location>
</feature>
<feature type="glycosylation site" description="N-linked (GlcNAc...) asparagine" evidence="3">
    <location>
        <position position="687"/>
    </location>
</feature>
<feature type="glycosylation site" description="N-linked (GlcNAc...) asparagine" evidence="3">
    <location>
        <position position="699"/>
    </location>
</feature>
<feature type="glycosylation site" description="N-linked (GlcNAc...) asparagine" evidence="3">
    <location>
        <position position="704"/>
    </location>
</feature>
<feature type="glycosylation site" description="N-linked (GlcNAc...) asparagine" evidence="3">
    <location>
        <position position="805"/>
    </location>
</feature>
<feature type="glycosylation site" description="N-linked (GlcNAc...) asparagine" evidence="3">
    <location>
        <position position="821"/>
    </location>
</feature>
<feature type="glycosylation site" description="N-linked (GlcNAc...) asparagine" evidence="3">
    <location>
        <position position="832"/>
    </location>
</feature>
<organism>
    <name type="scientific">Oryza sativa subsp. japonica</name>
    <name type="common">Rice</name>
    <dbReference type="NCBI Taxonomy" id="39947"/>
    <lineage>
        <taxon>Eukaryota</taxon>
        <taxon>Viridiplantae</taxon>
        <taxon>Streptophyta</taxon>
        <taxon>Embryophyta</taxon>
        <taxon>Tracheophyta</taxon>
        <taxon>Spermatophyta</taxon>
        <taxon>Magnoliopsida</taxon>
        <taxon>Liliopsida</taxon>
        <taxon>Poales</taxon>
        <taxon>Poaceae</taxon>
        <taxon>BOP clade</taxon>
        <taxon>Oryzoideae</taxon>
        <taxon>Oryzeae</taxon>
        <taxon>Oryzinae</taxon>
        <taxon>Oryza</taxon>
        <taxon>Oryza sativa</taxon>
    </lineage>
</organism>
<name>MSP1_ORYSJ</name>
<proteinExistence type="evidence at protein level"/>
<evidence type="ECO:0000255" key="1"/>
<evidence type="ECO:0000255" key="2">
    <source>
        <dbReference type="PROSITE-ProRule" id="PRU00159"/>
    </source>
</evidence>
<evidence type="ECO:0000255" key="3">
    <source>
        <dbReference type="PROSITE-ProRule" id="PRU00498"/>
    </source>
</evidence>
<evidence type="ECO:0000269" key="4">
    <source>
    </source>
</evidence>
<evidence type="ECO:0000269" key="5">
    <source>
    </source>
</evidence>
<evidence type="ECO:0000303" key="6">
    <source>
    </source>
</evidence>
<evidence type="ECO:0000305" key="7"/>
<evidence type="ECO:0000312" key="8">
    <source>
        <dbReference type="EMBL" id="BAB86144.1"/>
    </source>
</evidence>
<evidence type="ECO:0000312" key="9">
    <source>
        <dbReference type="EMBL" id="BAF07116.1"/>
    </source>
</evidence>
<gene>
    <name evidence="6" type="primary">MSP1</name>
    <name evidence="9" type="ordered locus">Os01g0917500</name>
    <name evidence="7" type="ordered locus">LOC_Os01g68870</name>
    <name evidence="8" type="ORF">P0413C03.22</name>
</gene>
<sequence length="1294" mass="141319">MVSNSFWLFILLVSFIPISAWAESRDISTLFTLRDSITEGKGFLRNWFDSETPPCSWSGITCIGHNVVAIDLSSVPLYAPFPLCIGAFQSLVRLNFSGCGFSGELPEALGNLQNLQYLDLSNNELTGPIPISLYNLKMLKEMVLDYNSLSGQLSPAIAQLQHLTKLSISMNSISGSLPPDLGSLKNLELLDIKMNTFNGSIPATFGNLSCLLHFDASQNNLTGSIFPGITSLTNLLTLDLSSNSFEGTIPREIGQLENLELLILGKNDLTGRIPQEIGSLKQLKLLHLEECQFTGKIPWSISGLSSLTELDISDNNFDAELPSSMGELGNLTQLIAKNAGLSGNMPKELGNCKKLTVINLSFNALIGPIPEEFADLEAIVSFFVEGNKLSGRVPDWIQKWKNARSIRLGQNKFSGPLPVLPLQHLLSFAAESNLLSGSIPSHICQANSLHSLLLHHNNLTGTIDEAFKGCTNLTELNLLDNHIHGEVPGYLAELPLVTLELSQNKFAGMLPAELWESKTLLEISLSNNEITGPIPESIGKLSVLQRLHIDNNLLEGPIPQSVGDLRNLTNLSLRGNRLSGIIPLALFNCRKLATLDLSYNNLTGNIPSAISHLTLLDSLILSSNQLSGSIPAEICVGFENEAHPDSEFLQHHGLLDLSYNQLTGQIPTSIKNCAMVMVLNLQGNLLNGTIPVELGELTNLTSINLSFNEFVGPMLPWSGPLVQLQGLILSNNHLDGSIPAKIGQILPKIAVLDLSSNALTGTLPQSLLCNNYLNHLDVSNNHLSGHIQFSCPDGKEYSSTLLFFNSSSNHFSGSLDESISNFTQLSTLDIHNNSLTGRLPSALSDLSSLNYLDLSSNNLYGAIPCGICNIFGLSFANFSGNYIDMYSLADCAAGGICSTNGTDHKALHPYHRVRRAITICAFTFVIIIVLVLLAVYLRRKLVRSRPLAFESASKAKATVEPTSTDELLGKKSREPLSINLATFEHALLRVTADDILKATENFSKVHIIGDGGFGTVYKAALPEGRRVAIKRLHGGHQFQGDREFLAEMETIGKVKHPNLVPLLGYCVCGDERFLIYEYMENGSLEMWLRNRADALEALGWPDRLKICLGSARGLAFLHHGFVPHIIHRDMKSSNILLDENFEPRVSDFGLARIISACETHVSTDIAGTFGYIPPEYGLTMKSTTKGDVYSFGVVMLELLTGRPPTGQEEVQGGGNLVGWVRWMIARGKQNELFDPCLPVSSVWREQMARVLAIARDCTADEPFKRPTMLEVVKGLKMTHGMECGPLVVTVSRDM</sequence>
<keyword id="KW-0067">ATP-binding</keyword>
<keyword id="KW-1003">Cell membrane</keyword>
<keyword id="KW-0325">Glycoprotein</keyword>
<keyword id="KW-0418">Kinase</keyword>
<keyword id="KW-0433">Leucine-rich repeat</keyword>
<keyword id="KW-0469">Meiosis</keyword>
<keyword id="KW-0472">Membrane</keyword>
<keyword id="KW-0547">Nucleotide-binding</keyword>
<keyword id="KW-0675">Receptor</keyword>
<keyword id="KW-1185">Reference proteome</keyword>
<keyword id="KW-0677">Repeat</keyword>
<keyword id="KW-0723">Serine/threonine-protein kinase</keyword>
<keyword id="KW-0732">Signal</keyword>
<keyword id="KW-0808">Transferase</keyword>
<keyword id="KW-0812">Transmembrane</keyword>
<keyword id="KW-1133">Transmembrane helix</keyword>
<reference key="1">
    <citation type="journal article" date="2003" name="Plant Cell">
        <title>The MSP1 gene is necessary to restrict the number of cells entering into male and female sporogenesis and to initiate anther wall formation in rice.</title>
        <authorList>
            <person name="Nonomura K."/>
            <person name="Miyoshi K."/>
            <person name="Eiguchi M."/>
            <person name="Suzuki T."/>
            <person name="Miyao A."/>
            <person name="Hirochika H."/>
            <person name="Kurata N."/>
        </authorList>
    </citation>
    <scope>NUCLEOTIDE SEQUENCE [MRNA]</scope>
    <scope>FUNCTION</scope>
    <scope>DISRUPTION PHENOTYPE</scope>
    <source>
        <strain>cv. Nipponbare</strain>
    </source>
</reference>
<reference key="2">
    <citation type="journal article" date="2002" name="Nature">
        <title>The genome sequence and structure of rice chromosome 1.</title>
        <authorList>
            <person name="Sasaki T."/>
            <person name="Matsumoto T."/>
            <person name="Yamamoto K."/>
            <person name="Sakata K."/>
            <person name="Baba T."/>
            <person name="Katayose Y."/>
            <person name="Wu J."/>
            <person name="Niimura Y."/>
            <person name="Cheng Z."/>
            <person name="Nagamura Y."/>
            <person name="Antonio B.A."/>
            <person name="Kanamori H."/>
            <person name="Hosokawa S."/>
            <person name="Masukawa M."/>
            <person name="Arikawa K."/>
            <person name="Chiden Y."/>
            <person name="Hayashi M."/>
            <person name="Okamoto M."/>
            <person name="Ando T."/>
            <person name="Aoki H."/>
            <person name="Arita K."/>
            <person name="Hamada M."/>
            <person name="Harada C."/>
            <person name="Hijishita S."/>
            <person name="Honda M."/>
            <person name="Ichikawa Y."/>
            <person name="Idonuma A."/>
            <person name="Iijima M."/>
            <person name="Ikeda M."/>
            <person name="Ikeno M."/>
            <person name="Ito S."/>
            <person name="Ito T."/>
            <person name="Ito Y."/>
            <person name="Ito Y."/>
            <person name="Iwabuchi A."/>
            <person name="Kamiya K."/>
            <person name="Karasawa W."/>
            <person name="Katagiri S."/>
            <person name="Kikuta A."/>
            <person name="Kobayashi N."/>
            <person name="Kono I."/>
            <person name="Machita K."/>
            <person name="Maehara T."/>
            <person name="Mizuno H."/>
            <person name="Mizubayashi T."/>
            <person name="Mukai Y."/>
            <person name="Nagasaki H."/>
            <person name="Nakashima M."/>
            <person name="Nakama Y."/>
            <person name="Nakamichi Y."/>
            <person name="Nakamura M."/>
            <person name="Namiki N."/>
            <person name="Negishi M."/>
            <person name="Ohta I."/>
            <person name="Ono N."/>
            <person name="Saji S."/>
            <person name="Sakai K."/>
            <person name="Shibata M."/>
            <person name="Shimokawa T."/>
            <person name="Shomura A."/>
            <person name="Song J."/>
            <person name="Takazaki Y."/>
            <person name="Terasawa K."/>
            <person name="Tsuji K."/>
            <person name="Waki K."/>
            <person name="Yamagata H."/>
            <person name="Yamane H."/>
            <person name="Yoshiki S."/>
            <person name="Yoshihara R."/>
            <person name="Yukawa K."/>
            <person name="Zhong H."/>
            <person name="Iwama H."/>
            <person name="Endo T."/>
            <person name="Ito H."/>
            <person name="Hahn J.H."/>
            <person name="Kim H.-I."/>
            <person name="Eun M.-Y."/>
            <person name="Yano M."/>
            <person name="Jiang J."/>
            <person name="Gojobori T."/>
        </authorList>
    </citation>
    <scope>NUCLEOTIDE SEQUENCE [LARGE SCALE GENOMIC DNA]</scope>
    <source>
        <strain>cv. Nipponbare</strain>
    </source>
</reference>
<reference key="3">
    <citation type="journal article" date="2005" name="Nature">
        <title>The map-based sequence of the rice genome.</title>
        <authorList>
            <consortium name="International rice genome sequencing project (IRGSP)"/>
        </authorList>
    </citation>
    <scope>NUCLEOTIDE SEQUENCE [LARGE SCALE GENOMIC DNA]</scope>
    <source>
        <strain>cv. Nipponbare</strain>
    </source>
</reference>
<reference key="4">
    <citation type="journal article" date="2008" name="Nucleic Acids Res.">
        <title>The rice annotation project database (RAP-DB): 2008 update.</title>
        <authorList>
            <consortium name="The rice annotation project (RAP)"/>
        </authorList>
    </citation>
    <scope>GENOME REANNOTATION</scope>
    <source>
        <strain>cv. Nipponbare</strain>
    </source>
</reference>
<reference key="5">
    <citation type="journal article" date="2013" name="Rice">
        <title>Improvement of the Oryza sativa Nipponbare reference genome using next generation sequence and optical map data.</title>
        <authorList>
            <person name="Kawahara Y."/>
            <person name="de la Bastide M."/>
            <person name="Hamilton J.P."/>
            <person name="Kanamori H."/>
            <person name="McCombie W.R."/>
            <person name="Ouyang S."/>
            <person name="Schwartz D.C."/>
            <person name="Tanaka T."/>
            <person name="Wu J."/>
            <person name="Zhou S."/>
            <person name="Childs K.L."/>
            <person name="Davidson R.M."/>
            <person name="Lin H."/>
            <person name="Quesada-Ocampo L."/>
            <person name="Vaillancourt B."/>
            <person name="Sakai H."/>
            <person name="Lee S.S."/>
            <person name="Kim J."/>
            <person name="Numa H."/>
            <person name="Itoh T."/>
            <person name="Buell C.R."/>
            <person name="Matsumoto T."/>
        </authorList>
    </citation>
    <scope>GENOME REANNOTATION</scope>
    <source>
        <strain>cv. Nipponbare</strain>
    </source>
</reference>
<reference key="6">
    <citation type="journal article" date="2008" name="Plant J.">
        <title>OsTDL1A binds to the LRR domain of rice receptor kinase MSP1, and is required to limit sporocyte numbers.</title>
        <authorList>
            <person name="Zhao X."/>
            <person name="de Palma J."/>
            <person name="Oane R."/>
            <person name="Gamuyao R."/>
            <person name="Luo M."/>
            <person name="Chaudhury A."/>
            <person name="Herve P."/>
            <person name="Xue Q."/>
            <person name="Bennett J."/>
        </authorList>
    </citation>
    <scope>INTERACTION WITH TDL1A</scope>
    <scope>TISSUE SPECIFICITY</scope>
</reference>
<comment type="function">
    <text evidence="4">Receptor-like kinase that plays important roles in restricting the number of cells entering into male and female sporogenesis. Involved in cell specification during anther development and initiation of anther wall formation.</text>
</comment>
<comment type="catalytic activity">
    <reaction evidence="1">
        <text>L-seryl-[protein] + ATP = O-phospho-L-seryl-[protein] + ADP + H(+)</text>
        <dbReference type="Rhea" id="RHEA:17989"/>
        <dbReference type="Rhea" id="RHEA-COMP:9863"/>
        <dbReference type="Rhea" id="RHEA-COMP:11604"/>
        <dbReference type="ChEBI" id="CHEBI:15378"/>
        <dbReference type="ChEBI" id="CHEBI:29999"/>
        <dbReference type="ChEBI" id="CHEBI:30616"/>
        <dbReference type="ChEBI" id="CHEBI:83421"/>
        <dbReference type="ChEBI" id="CHEBI:456216"/>
        <dbReference type="EC" id="2.7.11.1"/>
    </reaction>
</comment>
<comment type="catalytic activity">
    <reaction evidence="1">
        <text>L-threonyl-[protein] + ATP = O-phospho-L-threonyl-[protein] + ADP + H(+)</text>
        <dbReference type="Rhea" id="RHEA:46608"/>
        <dbReference type="Rhea" id="RHEA-COMP:11060"/>
        <dbReference type="Rhea" id="RHEA-COMP:11605"/>
        <dbReference type="ChEBI" id="CHEBI:15378"/>
        <dbReference type="ChEBI" id="CHEBI:30013"/>
        <dbReference type="ChEBI" id="CHEBI:30616"/>
        <dbReference type="ChEBI" id="CHEBI:61977"/>
        <dbReference type="ChEBI" id="CHEBI:456216"/>
        <dbReference type="EC" id="2.7.11.1"/>
    </reaction>
</comment>
<comment type="subunit">
    <text evidence="5">Interacts with TDL1A.</text>
</comment>
<comment type="subcellular location">
    <subcellularLocation>
        <location evidence="7">Cell membrane</location>
        <topology evidence="1">Single-pass type I membrane protein</topology>
    </subcellularLocation>
</comment>
<comment type="tissue specificity">
    <text evidence="5">Expressed in anthers and ovules during meiosis.</text>
</comment>
<comment type="disruption phenotype">
    <text evidence="4">Male-sterile phenotype due to the absence of tapetum. Presence of extra microsporocytes in the developing anthers and ovules.</text>
</comment>
<comment type="similarity">
    <text evidence="2">Belongs to the protein kinase superfamily. Ser/Thr protein kinase family.</text>
</comment>
<protein>
    <recommendedName>
        <fullName evidence="7">Leucine-rich repeat receptor protein kinase MSP1</fullName>
        <ecNumber evidence="1">2.7.11.1</ecNumber>
    </recommendedName>
    <alternativeName>
        <fullName evidence="6">Protein MULTIPLE SPOROCYTE 1</fullName>
    </alternativeName>
</protein>
<accession>Q8RZV7</accession>